<comment type="catalytic activity">
    <reaction evidence="2">
        <text>GTP + H2O = 7,8-dihydroneopterin 3'-triphosphate + formate + H(+)</text>
        <dbReference type="Rhea" id="RHEA:17473"/>
        <dbReference type="ChEBI" id="CHEBI:15377"/>
        <dbReference type="ChEBI" id="CHEBI:15378"/>
        <dbReference type="ChEBI" id="CHEBI:15740"/>
        <dbReference type="ChEBI" id="CHEBI:37565"/>
        <dbReference type="ChEBI" id="CHEBI:58462"/>
        <dbReference type="EC" id="3.5.4.16"/>
    </reaction>
</comment>
<comment type="pathway">
    <text evidence="2">Cofactor biosynthesis; 7,8-dihydroneopterin triphosphate biosynthesis; 7,8-dihydroneopterin triphosphate from GTP: step 1/1.</text>
</comment>
<comment type="subunit">
    <text evidence="1">Toroid-shaped homodecamer, composed of two pentamers of five dimers.</text>
</comment>
<comment type="similarity">
    <text evidence="2">Belongs to the GTP cyclohydrolase I family.</text>
</comment>
<dbReference type="EC" id="3.5.4.16" evidence="2"/>
<dbReference type="EMBL" id="AP008232">
    <property type="protein sequence ID" value="BAE74232.1"/>
    <property type="molecule type" value="Genomic_DNA"/>
</dbReference>
<dbReference type="RefSeq" id="WP_011410818.1">
    <property type="nucleotide sequence ID" value="NC_007712.1"/>
</dbReference>
<dbReference type="SMR" id="Q2NUE3"/>
<dbReference type="STRING" id="343509.SG0957"/>
<dbReference type="KEGG" id="sgl:SG0957"/>
<dbReference type="eggNOG" id="COG0302">
    <property type="taxonomic scope" value="Bacteria"/>
</dbReference>
<dbReference type="HOGENOM" id="CLU_049768_3_2_6"/>
<dbReference type="OrthoDB" id="9801207at2"/>
<dbReference type="UniPathway" id="UPA00848">
    <property type="reaction ID" value="UER00151"/>
</dbReference>
<dbReference type="Proteomes" id="UP000001932">
    <property type="component" value="Chromosome"/>
</dbReference>
<dbReference type="GO" id="GO:0005737">
    <property type="term" value="C:cytoplasm"/>
    <property type="evidence" value="ECO:0007669"/>
    <property type="project" value="TreeGrafter"/>
</dbReference>
<dbReference type="GO" id="GO:0005525">
    <property type="term" value="F:GTP binding"/>
    <property type="evidence" value="ECO:0007669"/>
    <property type="project" value="UniProtKB-KW"/>
</dbReference>
<dbReference type="GO" id="GO:0003934">
    <property type="term" value="F:GTP cyclohydrolase I activity"/>
    <property type="evidence" value="ECO:0007669"/>
    <property type="project" value="UniProtKB-UniRule"/>
</dbReference>
<dbReference type="GO" id="GO:0008270">
    <property type="term" value="F:zinc ion binding"/>
    <property type="evidence" value="ECO:0007669"/>
    <property type="project" value="UniProtKB-UniRule"/>
</dbReference>
<dbReference type="GO" id="GO:0006730">
    <property type="term" value="P:one-carbon metabolic process"/>
    <property type="evidence" value="ECO:0007669"/>
    <property type="project" value="UniProtKB-UniRule"/>
</dbReference>
<dbReference type="GO" id="GO:0006729">
    <property type="term" value="P:tetrahydrobiopterin biosynthetic process"/>
    <property type="evidence" value="ECO:0007669"/>
    <property type="project" value="TreeGrafter"/>
</dbReference>
<dbReference type="GO" id="GO:0046654">
    <property type="term" value="P:tetrahydrofolate biosynthetic process"/>
    <property type="evidence" value="ECO:0007669"/>
    <property type="project" value="UniProtKB-UniRule"/>
</dbReference>
<dbReference type="FunFam" id="1.10.286.10:FF:000002">
    <property type="entry name" value="GTP cyclohydrolase 1"/>
    <property type="match status" value="1"/>
</dbReference>
<dbReference type="FunFam" id="3.30.1130.10:FF:000001">
    <property type="entry name" value="GTP cyclohydrolase 1"/>
    <property type="match status" value="1"/>
</dbReference>
<dbReference type="Gene3D" id="1.10.286.10">
    <property type="match status" value="1"/>
</dbReference>
<dbReference type="Gene3D" id="3.30.1130.10">
    <property type="match status" value="1"/>
</dbReference>
<dbReference type="HAMAP" id="MF_00223">
    <property type="entry name" value="FolE"/>
    <property type="match status" value="1"/>
</dbReference>
<dbReference type="InterPro" id="IPR043133">
    <property type="entry name" value="GTP-CH-I_C/QueF"/>
</dbReference>
<dbReference type="InterPro" id="IPR043134">
    <property type="entry name" value="GTP-CH-I_N"/>
</dbReference>
<dbReference type="InterPro" id="IPR001474">
    <property type="entry name" value="GTP_CycHdrlase_I"/>
</dbReference>
<dbReference type="InterPro" id="IPR018234">
    <property type="entry name" value="GTP_CycHdrlase_I_CS"/>
</dbReference>
<dbReference type="InterPro" id="IPR020602">
    <property type="entry name" value="GTP_CycHdrlase_I_dom"/>
</dbReference>
<dbReference type="NCBIfam" id="TIGR00063">
    <property type="entry name" value="folE"/>
    <property type="match status" value="1"/>
</dbReference>
<dbReference type="NCBIfam" id="NF006824">
    <property type="entry name" value="PRK09347.1-1"/>
    <property type="match status" value="1"/>
</dbReference>
<dbReference type="NCBIfam" id="NF006826">
    <property type="entry name" value="PRK09347.1-3"/>
    <property type="match status" value="1"/>
</dbReference>
<dbReference type="PANTHER" id="PTHR11109:SF7">
    <property type="entry name" value="GTP CYCLOHYDROLASE 1"/>
    <property type="match status" value="1"/>
</dbReference>
<dbReference type="PANTHER" id="PTHR11109">
    <property type="entry name" value="GTP CYCLOHYDROLASE I"/>
    <property type="match status" value="1"/>
</dbReference>
<dbReference type="Pfam" id="PF01227">
    <property type="entry name" value="GTP_cyclohydroI"/>
    <property type="match status" value="1"/>
</dbReference>
<dbReference type="SUPFAM" id="SSF55620">
    <property type="entry name" value="Tetrahydrobiopterin biosynthesis enzymes-like"/>
    <property type="match status" value="1"/>
</dbReference>
<dbReference type="PROSITE" id="PS00859">
    <property type="entry name" value="GTP_CYCLOHYDROL_1_1"/>
    <property type="match status" value="1"/>
</dbReference>
<dbReference type="PROSITE" id="PS00860">
    <property type="entry name" value="GTP_CYCLOHYDROL_1_2"/>
    <property type="match status" value="1"/>
</dbReference>
<reference key="1">
    <citation type="journal article" date="2006" name="Genome Res.">
        <title>Massive genome erosion and functional adaptations provide insights into the symbiotic lifestyle of Sodalis glossinidius in the tsetse host.</title>
        <authorList>
            <person name="Toh H."/>
            <person name="Weiss B.L."/>
            <person name="Perkin S.A.H."/>
            <person name="Yamashita A."/>
            <person name="Oshima K."/>
            <person name="Hattori M."/>
            <person name="Aksoy S."/>
        </authorList>
    </citation>
    <scope>NUCLEOTIDE SEQUENCE [LARGE SCALE GENOMIC DNA]</scope>
    <source>
        <strain>morsitans</strain>
    </source>
</reference>
<evidence type="ECO:0000250" key="1"/>
<evidence type="ECO:0000255" key="2">
    <source>
        <dbReference type="HAMAP-Rule" id="MF_00223"/>
    </source>
</evidence>
<keyword id="KW-0342">GTP-binding</keyword>
<keyword id="KW-0378">Hydrolase</keyword>
<keyword id="KW-0479">Metal-binding</keyword>
<keyword id="KW-0547">Nucleotide-binding</keyword>
<keyword id="KW-0554">One-carbon metabolism</keyword>
<keyword id="KW-0862">Zinc</keyword>
<gene>
    <name evidence="2" type="primary">folE</name>
    <name type="ordered locus">SG0957</name>
</gene>
<organism>
    <name type="scientific">Sodalis glossinidius (strain morsitans)</name>
    <dbReference type="NCBI Taxonomy" id="343509"/>
    <lineage>
        <taxon>Bacteria</taxon>
        <taxon>Pseudomonadati</taxon>
        <taxon>Pseudomonadota</taxon>
        <taxon>Gammaproteobacteria</taxon>
        <taxon>Enterobacterales</taxon>
        <taxon>Bruguierivoracaceae</taxon>
        <taxon>Sodalis</taxon>
    </lineage>
</organism>
<protein>
    <recommendedName>
        <fullName evidence="2">GTP cyclohydrolase 1</fullName>
        <ecNumber evidence="2">3.5.4.16</ecNumber>
    </recommendedName>
    <alternativeName>
        <fullName evidence="2">GTP cyclohydrolase I</fullName>
        <shortName evidence="2">GTP-CH-I</shortName>
    </alternativeName>
</protein>
<feature type="chain" id="PRO_1000043743" description="GTP cyclohydrolase 1">
    <location>
        <begin position="1"/>
        <end position="221"/>
    </location>
</feature>
<feature type="binding site" evidence="2">
    <location>
        <position position="109"/>
    </location>
    <ligand>
        <name>Zn(2+)</name>
        <dbReference type="ChEBI" id="CHEBI:29105"/>
    </ligand>
</feature>
<feature type="binding site" evidence="2">
    <location>
        <position position="112"/>
    </location>
    <ligand>
        <name>Zn(2+)</name>
        <dbReference type="ChEBI" id="CHEBI:29105"/>
    </ligand>
</feature>
<feature type="binding site" evidence="2">
    <location>
        <position position="180"/>
    </location>
    <ligand>
        <name>Zn(2+)</name>
        <dbReference type="ChEBI" id="CHEBI:29105"/>
    </ligand>
</feature>
<accession>Q2NUE3</accession>
<proteinExistence type="inferred from homology"/>
<name>GCH1_SODGM</name>
<sequence>MVTLTKEASQVRDALLARGLETPLRGEVLDNEVRKRLIAEHMTEIMTLLNLDLTDDSLAETPHRIAKMYVEEIFAGLDYANFPKITVIENKMKVDEMVTVRDITLTSTCEHHFVIIDGKATVSYIPKHCVIGLSKINRIVQFFAQRPQVQERLTQQIMLALQTLLGTNNVAVSIDAVHYCVKARGIRDATSTTTITSLGGLFKSSQNTRQEFLRAVTHYNG</sequence>